<sequence length="94" mass="10189">MLQSNEYFSGKVKSIGFTSSSTGRASVGVMAEGEYTFGTAEPEEMTVVSGALKVLLPGTVEWKVYTAGEVFNVPGHSEFHLQVAEPTSYLCRYL</sequence>
<keyword id="KW-0328">Glycosyltransferase</keyword>
<keyword id="KW-0808">Transferase</keyword>
<name>PPNP_SALTI</name>
<dbReference type="EC" id="2.4.2.1" evidence="1"/>
<dbReference type="EC" id="2.4.2.2" evidence="1"/>
<dbReference type="EMBL" id="AL513382">
    <property type="protein sequence ID" value="CAD08846.1"/>
    <property type="molecule type" value="Genomic_DNA"/>
</dbReference>
<dbReference type="EMBL" id="AE014613">
    <property type="protein sequence ID" value="AAO70062.1"/>
    <property type="molecule type" value="Genomic_DNA"/>
</dbReference>
<dbReference type="RefSeq" id="NP_454986.1">
    <property type="nucleotide sequence ID" value="NC_003198.1"/>
</dbReference>
<dbReference type="RefSeq" id="WP_000941953.1">
    <property type="nucleotide sequence ID" value="NZ_WSUR01000017.1"/>
</dbReference>
<dbReference type="SMR" id="Q8Z8Y9"/>
<dbReference type="STRING" id="220341.gene:17584451"/>
<dbReference type="KEGG" id="stt:t2473"/>
<dbReference type="KEGG" id="sty:STY0424"/>
<dbReference type="PATRIC" id="fig|220341.7.peg.422"/>
<dbReference type="eggNOG" id="COG3123">
    <property type="taxonomic scope" value="Bacteria"/>
</dbReference>
<dbReference type="HOGENOM" id="CLU_157874_0_0_6"/>
<dbReference type="OMA" id="ADYCCSY"/>
<dbReference type="OrthoDB" id="9793848at2"/>
<dbReference type="Proteomes" id="UP000000541">
    <property type="component" value="Chromosome"/>
</dbReference>
<dbReference type="Proteomes" id="UP000002670">
    <property type="component" value="Chromosome"/>
</dbReference>
<dbReference type="GO" id="GO:0005829">
    <property type="term" value="C:cytosol"/>
    <property type="evidence" value="ECO:0007669"/>
    <property type="project" value="TreeGrafter"/>
</dbReference>
<dbReference type="GO" id="GO:0047975">
    <property type="term" value="F:guanosine phosphorylase activity"/>
    <property type="evidence" value="ECO:0007669"/>
    <property type="project" value="UniProtKB-EC"/>
</dbReference>
<dbReference type="GO" id="GO:0004731">
    <property type="term" value="F:purine-nucleoside phosphorylase activity"/>
    <property type="evidence" value="ECO:0007669"/>
    <property type="project" value="UniProtKB-UniRule"/>
</dbReference>
<dbReference type="GO" id="GO:0009032">
    <property type="term" value="F:thymidine phosphorylase activity"/>
    <property type="evidence" value="ECO:0007669"/>
    <property type="project" value="UniProtKB-EC"/>
</dbReference>
<dbReference type="GO" id="GO:0004850">
    <property type="term" value="F:uridine phosphorylase activity"/>
    <property type="evidence" value="ECO:0007669"/>
    <property type="project" value="UniProtKB-EC"/>
</dbReference>
<dbReference type="CDD" id="cd20296">
    <property type="entry name" value="cupin_PpnP-like"/>
    <property type="match status" value="1"/>
</dbReference>
<dbReference type="FunFam" id="2.60.120.10:FF:000016">
    <property type="entry name" value="Pyrimidine/purine nucleoside phosphorylase"/>
    <property type="match status" value="1"/>
</dbReference>
<dbReference type="Gene3D" id="2.60.120.10">
    <property type="entry name" value="Jelly Rolls"/>
    <property type="match status" value="1"/>
</dbReference>
<dbReference type="HAMAP" id="MF_01537">
    <property type="entry name" value="Nucleos_phosphorylase_PpnP"/>
    <property type="match status" value="1"/>
</dbReference>
<dbReference type="InterPro" id="IPR009664">
    <property type="entry name" value="Ppnp"/>
</dbReference>
<dbReference type="InterPro" id="IPR014710">
    <property type="entry name" value="RmlC-like_jellyroll"/>
</dbReference>
<dbReference type="InterPro" id="IPR011051">
    <property type="entry name" value="RmlC_Cupin_sf"/>
</dbReference>
<dbReference type="NCBIfam" id="NF007875">
    <property type="entry name" value="PRK10579.1"/>
    <property type="match status" value="1"/>
</dbReference>
<dbReference type="PANTHER" id="PTHR36540">
    <property type="entry name" value="PYRIMIDINE/PURINE NUCLEOSIDE PHOSPHORYLASE"/>
    <property type="match status" value="1"/>
</dbReference>
<dbReference type="PANTHER" id="PTHR36540:SF1">
    <property type="entry name" value="PYRIMIDINE_PURINE NUCLEOSIDE PHOSPHORYLASE"/>
    <property type="match status" value="1"/>
</dbReference>
<dbReference type="Pfam" id="PF06865">
    <property type="entry name" value="Ppnp"/>
    <property type="match status" value="1"/>
</dbReference>
<dbReference type="SUPFAM" id="SSF51182">
    <property type="entry name" value="RmlC-like cupins"/>
    <property type="match status" value="1"/>
</dbReference>
<feature type="chain" id="PRO_0000211780" description="Pyrimidine/purine nucleoside phosphorylase">
    <location>
        <begin position="1"/>
        <end position="94"/>
    </location>
</feature>
<gene>
    <name evidence="1" type="primary">ppnP</name>
    <name type="ordered locus">STY0424</name>
    <name type="ordered locus">t2473</name>
</gene>
<proteinExistence type="inferred from homology"/>
<organism>
    <name type="scientific">Salmonella typhi</name>
    <dbReference type="NCBI Taxonomy" id="90370"/>
    <lineage>
        <taxon>Bacteria</taxon>
        <taxon>Pseudomonadati</taxon>
        <taxon>Pseudomonadota</taxon>
        <taxon>Gammaproteobacteria</taxon>
        <taxon>Enterobacterales</taxon>
        <taxon>Enterobacteriaceae</taxon>
        <taxon>Salmonella</taxon>
    </lineage>
</organism>
<comment type="function">
    <text evidence="1">Catalyzes the phosphorolysis of diverse nucleosides, yielding D-ribose 1-phosphate and the respective free bases. Can use uridine, adenosine, guanosine, cytidine, thymidine, inosine and xanthosine as substrates. Also catalyzes the reverse reactions.</text>
</comment>
<comment type="catalytic activity">
    <reaction evidence="1">
        <text>a purine D-ribonucleoside + phosphate = a purine nucleobase + alpha-D-ribose 1-phosphate</text>
        <dbReference type="Rhea" id="RHEA:19805"/>
        <dbReference type="ChEBI" id="CHEBI:26386"/>
        <dbReference type="ChEBI" id="CHEBI:43474"/>
        <dbReference type="ChEBI" id="CHEBI:57720"/>
        <dbReference type="ChEBI" id="CHEBI:142355"/>
        <dbReference type="EC" id="2.4.2.1"/>
    </reaction>
</comment>
<comment type="catalytic activity">
    <reaction evidence="1">
        <text>adenosine + phosphate = alpha-D-ribose 1-phosphate + adenine</text>
        <dbReference type="Rhea" id="RHEA:27642"/>
        <dbReference type="ChEBI" id="CHEBI:16335"/>
        <dbReference type="ChEBI" id="CHEBI:16708"/>
        <dbReference type="ChEBI" id="CHEBI:43474"/>
        <dbReference type="ChEBI" id="CHEBI:57720"/>
        <dbReference type="EC" id="2.4.2.1"/>
    </reaction>
</comment>
<comment type="catalytic activity">
    <reaction evidence="1">
        <text>cytidine + phosphate = cytosine + alpha-D-ribose 1-phosphate</text>
        <dbReference type="Rhea" id="RHEA:52540"/>
        <dbReference type="ChEBI" id="CHEBI:16040"/>
        <dbReference type="ChEBI" id="CHEBI:17562"/>
        <dbReference type="ChEBI" id="CHEBI:43474"/>
        <dbReference type="ChEBI" id="CHEBI:57720"/>
        <dbReference type="EC" id="2.4.2.2"/>
    </reaction>
</comment>
<comment type="catalytic activity">
    <reaction evidence="1">
        <text>guanosine + phosphate = alpha-D-ribose 1-phosphate + guanine</text>
        <dbReference type="Rhea" id="RHEA:13233"/>
        <dbReference type="ChEBI" id="CHEBI:16235"/>
        <dbReference type="ChEBI" id="CHEBI:16750"/>
        <dbReference type="ChEBI" id="CHEBI:43474"/>
        <dbReference type="ChEBI" id="CHEBI:57720"/>
        <dbReference type="EC" id="2.4.2.1"/>
    </reaction>
</comment>
<comment type="catalytic activity">
    <reaction evidence="1">
        <text>inosine + phosphate = alpha-D-ribose 1-phosphate + hypoxanthine</text>
        <dbReference type="Rhea" id="RHEA:27646"/>
        <dbReference type="ChEBI" id="CHEBI:17368"/>
        <dbReference type="ChEBI" id="CHEBI:17596"/>
        <dbReference type="ChEBI" id="CHEBI:43474"/>
        <dbReference type="ChEBI" id="CHEBI:57720"/>
        <dbReference type="EC" id="2.4.2.1"/>
    </reaction>
</comment>
<comment type="catalytic activity">
    <reaction evidence="1">
        <text>thymidine + phosphate = 2-deoxy-alpha-D-ribose 1-phosphate + thymine</text>
        <dbReference type="Rhea" id="RHEA:16037"/>
        <dbReference type="ChEBI" id="CHEBI:17748"/>
        <dbReference type="ChEBI" id="CHEBI:17821"/>
        <dbReference type="ChEBI" id="CHEBI:43474"/>
        <dbReference type="ChEBI" id="CHEBI:57259"/>
        <dbReference type="EC" id="2.4.2.2"/>
    </reaction>
</comment>
<comment type="catalytic activity">
    <reaction evidence="1">
        <text>uridine + phosphate = alpha-D-ribose 1-phosphate + uracil</text>
        <dbReference type="Rhea" id="RHEA:24388"/>
        <dbReference type="ChEBI" id="CHEBI:16704"/>
        <dbReference type="ChEBI" id="CHEBI:17568"/>
        <dbReference type="ChEBI" id="CHEBI:43474"/>
        <dbReference type="ChEBI" id="CHEBI:57720"/>
        <dbReference type="EC" id="2.4.2.2"/>
    </reaction>
</comment>
<comment type="catalytic activity">
    <reaction evidence="1">
        <text>xanthosine + phosphate = alpha-D-ribose 1-phosphate + xanthine</text>
        <dbReference type="Rhea" id="RHEA:27638"/>
        <dbReference type="ChEBI" id="CHEBI:17712"/>
        <dbReference type="ChEBI" id="CHEBI:18107"/>
        <dbReference type="ChEBI" id="CHEBI:43474"/>
        <dbReference type="ChEBI" id="CHEBI:57720"/>
        <dbReference type="EC" id="2.4.2.1"/>
    </reaction>
</comment>
<comment type="similarity">
    <text evidence="1">Belongs to the nucleoside phosphorylase PpnP family.</text>
</comment>
<evidence type="ECO:0000255" key="1">
    <source>
        <dbReference type="HAMAP-Rule" id="MF_01537"/>
    </source>
</evidence>
<reference key="1">
    <citation type="journal article" date="2001" name="Nature">
        <title>Complete genome sequence of a multiple drug resistant Salmonella enterica serovar Typhi CT18.</title>
        <authorList>
            <person name="Parkhill J."/>
            <person name="Dougan G."/>
            <person name="James K.D."/>
            <person name="Thomson N.R."/>
            <person name="Pickard D."/>
            <person name="Wain J."/>
            <person name="Churcher C.M."/>
            <person name="Mungall K.L."/>
            <person name="Bentley S.D."/>
            <person name="Holden M.T.G."/>
            <person name="Sebaihia M."/>
            <person name="Baker S."/>
            <person name="Basham D."/>
            <person name="Brooks K."/>
            <person name="Chillingworth T."/>
            <person name="Connerton P."/>
            <person name="Cronin A."/>
            <person name="Davis P."/>
            <person name="Davies R.M."/>
            <person name="Dowd L."/>
            <person name="White N."/>
            <person name="Farrar J."/>
            <person name="Feltwell T."/>
            <person name="Hamlin N."/>
            <person name="Haque A."/>
            <person name="Hien T.T."/>
            <person name="Holroyd S."/>
            <person name="Jagels K."/>
            <person name="Krogh A."/>
            <person name="Larsen T.S."/>
            <person name="Leather S."/>
            <person name="Moule S."/>
            <person name="O'Gaora P."/>
            <person name="Parry C."/>
            <person name="Quail M.A."/>
            <person name="Rutherford K.M."/>
            <person name="Simmonds M."/>
            <person name="Skelton J."/>
            <person name="Stevens K."/>
            <person name="Whitehead S."/>
            <person name="Barrell B.G."/>
        </authorList>
    </citation>
    <scope>NUCLEOTIDE SEQUENCE [LARGE SCALE GENOMIC DNA]</scope>
    <source>
        <strain>CT18</strain>
    </source>
</reference>
<reference key="2">
    <citation type="journal article" date="2003" name="J. Bacteriol.">
        <title>Comparative genomics of Salmonella enterica serovar Typhi strains Ty2 and CT18.</title>
        <authorList>
            <person name="Deng W."/>
            <person name="Liou S.-R."/>
            <person name="Plunkett G. III"/>
            <person name="Mayhew G.F."/>
            <person name="Rose D.J."/>
            <person name="Burland V."/>
            <person name="Kodoyianni V."/>
            <person name="Schwartz D.C."/>
            <person name="Blattner F.R."/>
        </authorList>
    </citation>
    <scope>NUCLEOTIDE SEQUENCE [LARGE SCALE GENOMIC DNA]</scope>
    <source>
        <strain>ATCC 700931 / Ty2</strain>
    </source>
</reference>
<protein>
    <recommendedName>
        <fullName evidence="1">Pyrimidine/purine nucleoside phosphorylase</fullName>
        <ecNumber evidence="1">2.4.2.1</ecNumber>
        <ecNumber evidence="1">2.4.2.2</ecNumber>
    </recommendedName>
    <alternativeName>
        <fullName evidence="1">Adenosine phosphorylase</fullName>
    </alternativeName>
    <alternativeName>
        <fullName evidence="1">Cytidine phosphorylase</fullName>
    </alternativeName>
    <alternativeName>
        <fullName evidence="1">Guanosine phosphorylase</fullName>
    </alternativeName>
    <alternativeName>
        <fullName evidence="1">Inosine phosphorylase</fullName>
    </alternativeName>
    <alternativeName>
        <fullName evidence="1">Thymidine phosphorylase</fullName>
    </alternativeName>
    <alternativeName>
        <fullName evidence="1">Uridine phosphorylase</fullName>
    </alternativeName>
    <alternativeName>
        <fullName evidence="1">Xanthosine phosphorylase</fullName>
    </alternativeName>
</protein>
<accession>Q8Z8Y9</accession>
<accession>Q7C865</accession>